<gene>
    <name evidence="1" type="primary">lepA</name>
    <name type="ordered locus">SGR_4984</name>
</gene>
<proteinExistence type="inferred from homology"/>
<name>LEPA_STRGG</name>
<evidence type="ECO:0000255" key="1">
    <source>
        <dbReference type="HAMAP-Rule" id="MF_00071"/>
    </source>
</evidence>
<accession>B1VY28</accession>
<protein>
    <recommendedName>
        <fullName evidence="1">Elongation factor 4</fullName>
        <shortName evidence="1">EF-4</shortName>
        <ecNumber evidence="1">3.6.5.n1</ecNumber>
    </recommendedName>
    <alternativeName>
        <fullName evidence="1">Ribosomal back-translocase LepA</fullName>
    </alternativeName>
</protein>
<sequence>MPATPSNVPEPSRTDPALIRNFCIIAHIDHGKSTLADRMLQLTGVVDQRQMRAQYLDRMDIERERGITIKSQAVRLPWAPTEGEDKGLTHVLNMIDTPGHVDFTYEVSRSLAACEGTVLLVDAAQGIEAQTLANLYLAMENDLTIVPVLNKIDLPAAQPEKFSEELANLIGCQPEDVLKVSAKTGVGVDALLDRVVRDVPAPVGVADAPARAMIFDSVYDSYRGVVTYVRVVDGQLNKRERIRMMSTGATHELLEIGVSSPEMTPADGIGVGEVGYIITGVKDVRQSKVGDTITSLQNGATEALGGYKDPKPMVFSGLYPLDGSDYPDLREALDKLQLNDAALVYEPETSAALGFGFRVGFLGLLHLDVVRERLEREFGLDLIATAPNVVYRVEMEDGTEHVVTNPSEFPEGKIDKVHEPVVRATVLAPSEFIGAIMELCQGRRGTLLGMDYLSEDRVEIRYTLPLAEIVFDFFDQLKSKTRGYASLDYEPTGEQTANLVKVDILLHGDKVDAFSAVTHKDKAYAYGVRLVAKLQKLIPRQNFEVPIQAAIGARVIARETVRAIRKDVLAKCYGGDISRKRKLLEKQKEGKKRMKMVGNVEVPQDAFISVLSTDESAGEGKGKK</sequence>
<comment type="function">
    <text evidence="1">Required for accurate and efficient protein synthesis under certain stress conditions. May act as a fidelity factor of the translation reaction, by catalyzing a one-codon backward translocation of tRNAs on improperly translocated ribosomes. Back-translocation proceeds from a post-translocation (POST) complex to a pre-translocation (PRE) complex, thus giving elongation factor G a second chance to translocate the tRNAs correctly. Binds to ribosomes in a GTP-dependent manner.</text>
</comment>
<comment type="catalytic activity">
    <reaction evidence="1">
        <text>GTP + H2O = GDP + phosphate + H(+)</text>
        <dbReference type="Rhea" id="RHEA:19669"/>
        <dbReference type="ChEBI" id="CHEBI:15377"/>
        <dbReference type="ChEBI" id="CHEBI:15378"/>
        <dbReference type="ChEBI" id="CHEBI:37565"/>
        <dbReference type="ChEBI" id="CHEBI:43474"/>
        <dbReference type="ChEBI" id="CHEBI:58189"/>
        <dbReference type="EC" id="3.6.5.n1"/>
    </reaction>
</comment>
<comment type="subcellular location">
    <subcellularLocation>
        <location evidence="1">Cell membrane</location>
        <topology evidence="1">Peripheral membrane protein</topology>
        <orientation evidence="1">Cytoplasmic side</orientation>
    </subcellularLocation>
</comment>
<comment type="similarity">
    <text evidence="1">Belongs to the TRAFAC class translation factor GTPase superfamily. Classic translation factor GTPase family. LepA subfamily.</text>
</comment>
<dbReference type="EC" id="3.6.5.n1" evidence="1"/>
<dbReference type="EMBL" id="AP009493">
    <property type="protein sequence ID" value="BAG21813.1"/>
    <property type="molecule type" value="Genomic_DNA"/>
</dbReference>
<dbReference type="RefSeq" id="WP_003969244.1">
    <property type="nucleotide sequence ID" value="NC_010572.1"/>
</dbReference>
<dbReference type="SMR" id="B1VY28"/>
<dbReference type="GeneID" id="27782776"/>
<dbReference type="KEGG" id="sgr:SGR_4984"/>
<dbReference type="eggNOG" id="COG0481">
    <property type="taxonomic scope" value="Bacteria"/>
</dbReference>
<dbReference type="HOGENOM" id="CLU_009995_3_3_11"/>
<dbReference type="Proteomes" id="UP000001685">
    <property type="component" value="Chromosome"/>
</dbReference>
<dbReference type="GO" id="GO:0005886">
    <property type="term" value="C:plasma membrane"/>
    <property type="evidence" value="ECO:0007669"/>
    <property type="project" value="UniProtKB-SubCell"/>
</dbReference>
<dbReference type="GO" id="GO:0005525">
    <property type="term" value="F:GTP binding"/>
    <property type="evidence" value="ECO:0007669"/>
    <property type="project" value="UniProtKB-UniRule"/>
</dbReference>
<dbReference type="GO" id="GO:0003924">
    <property type="term" value="F:GTPase activity"/>
    <property type="evidence" value="ECO:0007669"/>
    <property type="project" value="UniProtKB-UniRule"/>
</dbReference>
<dbReference type="GO" id="GO:0043022">
    <property type="term" value="F:ribosome binding"/>
    <property type="evidence" value="ECO:0007669"/>
    <property type="project" value="UniProtKB-UniRule"/>
</dbReference>
<dbReference type="GO" id="GO:0003746">
    <property type="term" value="F:translation elongation factor activity"/>
    <property type="evidence" value="ECO:0007669"/>
    <property type="project" value="UniProtKB-UniRule"/>
</dbReference>
<dbReference type="GO" id="GO:0045727">
    <property type="term" value="P:positive regulation of translation"/>
    <property type="evidence" value="ECO:0007669"/>
    <property type="project" value="UniProtKB-UniRule"/>
</dbReference>
<dbReference type="CDD" id="cd03699">
    <property type="entry name" value="EF4_II"/>
    <property type="match status" value="1"/>
</dbReference>
<dbReference type="CDD" id="cd16260">
    <property type="entry name" value="EF4_III"/>
    <property type="match status" value="1"/>
</dbReference>
<dbReference type="CDD" id="cd01890">
    <property type="entry name" value="LepA"/>
    <property type="match status" value="1"/>
</dbReference>
<dbReference type="CDD" id="cd03709">
    <property type="entry name" value="lepA_C"/>
    <property type="match status" value="1"/>
</dbReference>
<dbReference type="FunFam" id="3.30.70.240:FF:000011">
    <property type="entry name" value="Elongation factor 4"/>
    <property type="match status" value="1"/>
</dbReference>
<dbReference type="FunFam" id="3.40.50.300:FF:000078">
    <property type="entry name" value="Elongation factor 4"/>
    <property type="match status" value="1"/>
</dbReference>
<dbReference type="FunFam" id="2.40.30.10:FF:000015">
    <property type="entry name" value="Translation factor GUF1, mitochondrial"/>
    <property type="match status" value="1"/>
</dbReference>
<dbReference type="FunFam" id="3.30.70.2570:FF:000001">
    <property type="entry name" value="Translation factor GUF1, mitochondrial"/>
    <property type="match status" value="1"/>
</dbReference>
<dbReference type="FunFam" id="3.30.70.870:FF:000004">
    <property type="entry name" value="Translation factor GUF1, mitochondrial"/>
    <property type="match status" value="1"/>
</dbReference>
<dbReference type="Gene3D" id="3.30.70.240">
    <property type="match status" value="1"/>
</dbReference>
<dbReference type="Gene3D" id="3.30.70.2570">
    <property type="entry name" value="Elongation factor 4, C-terminal domain"/>
    <property type="match status" value="1"/>
</dbReference>
<dbReference type="Gene3D" id="3.30.70.870">
    <property type="entry name" value="Elongation Factor G (Translational Gtpase), domain 3"/>
    <property type="match status" value="1"/>
</dbReference>
<dbReference type="Gene3D" id="3.40.50.300">
    <property type="entry name" value="P-loop containing nucleotide triphosphate hydrolases"/>
    <property type="match status" value="1"/>
</dbReference>
<dbReference type="Gene3D" id="2.40.30.10">
    <property type="entry name" value="Translation factors"/>
    <property type="match status" value="1"/>
</dbReference>
<dbReference type="HAMAP" id="MF_00071">
    <property type="entry name" value="LepA"/>
    <property type="match status" value="1"/>
</dbReference>
<dbReference type="InterPro" id="IPR006297">
    <property type="entry name" value="EF-4"/>
</dbReference>
<dbReference type="InterPro" id="IPR035647">
    <property type="entry name" value="EFG_III/V"/>
</dbReference>
<dbReference type="InterPro" id="IPR000640">
    <property type="entry name" value="EFG_V-like"/>
</dbReference>
<dbReference type="InterPro" id="IPR004161">
    <property type="entry name" value="EFTu-like_2"/>
</dbReference>
<dbReference type="InterPro" id="IPR031157">
    <property type="entry name" value="G_TR_CS"/>
</dbReference>
<dbReference type="InterPro" id="IPR038363">
    <property type="entry name" value="LepA_C_sf"/>
</dbReference>
<dbReference type="InterPro" id="IPR013842">
    <property type="entry name" value="LepA_CTD"/>
</dbReference>
<dbReference type="InterPro" id="IPR035654">
    <property type="entry name" value="LepA_IV"/>
</dbReference>
<dbReference type="InterPro" id="IPR027417">
    <property type="entry name" value="P-loop_NTPase"/>
</dbReference>
<dbReference type="InterPro" id="IPR005225">
    <property type="entry name" value="Small_GTP-bd"/>
</dbReference>
<dbReference type="InterPro" id="IPR000795">
    <property type="entry name" value="T_Tr_GTP-bd_dom"/>
</dbReference>
<dbReference type="InterPro" id="IPR009000">
    <property type="entry name" value="Transl_B-barrel_sf"/>
</dbReference>
<dbReference type="NCBIfam" id="TIGR01393">
    <property type="entry name" value="lepA"/>
    <property type="match status" value="1"/>
</dbReference>
<dbReference type="NCBIfam" id="TIGR00231">
    <property type="entry name" value="small_GTP"/>
    <property type="match status" value="1"/>
</dbReference>
<dbReference type="PANTHER" id="PTHR43512:SF4">
    <property type="entry name" value="TRANSLATION FACTOR GUF1 HOMOLOG, CHLOROPLASTIC"/>
    <property type="match status" value="1"/>
</dbReference>
<dbReference type="PANTHER" id="PTHR43512">
    <property type="entry name" value="TRANSLATION FACTOR GUF1-RELATED"/>
    <property type="match status" value="1"/>
</dbReference>
<dbReference type="Pfam" id="PF00679">
    <property type="entry name" value="EFG_C"/>
    <property type="match status" value="1"/>
</dbReference>
<dbReference type="Pfam" id="PF00009">
    <property type="entry name" value="GTP_EFTU"/>
    <property type="match status" value="1"/>
</dbReference>
<dbReference type="Pfam" id="PF03144">
    <property type="entry name" value="GTP_EFTU_D2"/>
    <property type="match status" value="1"/>
</dbReference>
<dbReference type="Pfam" id="PF06421">
    <property type="entry name" value="LepA_C"/>
    <property type="match status" value="1"/>
</dbReference>
<dbReference type="PRINTS" id="PR00315">
    <property type="entry name" value="ELONGATNFCT"/>
</dbReference>
<dbReference type="SMART" id="SM00838">
    <property type="entry name" value="EFG_C"/>
    <property type="match status" value="1"/>
</dbReference>
<dbReference type="SUPFAM" id="SSF54980">
    <property type="entry name" value="EF-G C-terminal domain-like"/>
    <property type="match status" value="2"/>
</dbReference>
<dbReference type="SUPFAM" id="SSF52540">
    <property type="entry name" value="P-loop containing nucleoside triphosphate hydrolases"/>
    <property type="match status" value="1"/>
</dbReference>
<dbReference type="SUPFAM" id="SSF50447">
    <property type="entry name" value="Translation proteins"/>
    <property type="match status" value="1"/>
</dbReference>
<dbReference type="PROSITE" id="PS00301">
    <property type="entry name" value="G_TR_1"/>
    <property type="match status" value="1"/>
</dbReference>
<dbReference type="PROSITE" id="PS51722">
    <property type="entry name" value="G_TR_2"/>
    <property type="match status" value="1"/>
</dbReference>
<keyword id="KW-1003">Cell membrane</keyword>
<keyword id="KW-0342">GTP-binding</keyword>
<keyword id="KW-0378">Hydrolase</keyword>
<keyword id="KW-0472">Membrane</keyword>
<keyword id="KW-0547">Nucleotide-binding</keyword>
<keyword id="KW-0648">Protein biosynthesis</keyword>
<feature type="chain" id="PRO_1000092449" description="Elongation factor 4">
    <location>
        <begin position="1"/>
        <end position="624"/>
    </location>
</feature>
<feature type="domain" description="tr-type G">
    <location>
        <begin position="17"/>
        <end position="203"/>
    </location>
</feature>
<feature type="binding site" evidence="1">
    <location>
        <begin position="29"/>
        <end position="34"/>
    </location>
    <ligand>
        <name>GTP</name>
        <dbReference type="ChEBI" id="CHEBI:37565"/>
    </ligand>
</feature>
<feature type="binding site" evidence="1">
    <location>
        <begin position="150"/>
        <end position="153"/>
    </location>
    <ligand>
        <name>GTP</name>
        <dbReference type="ChEBI" id="CHEBI:37565"/>
    </ligand>
</feature>
<organism>
    <name type="scientific">Streptomyces griseus subsp. griseus (strain JCM 4626 / CBS 651.72 / NBRC 13350 / KCC S-0626 / ISP 5235)</name>
    <dbReference type="NCBI Taxonomy" id="455632"/>
    <lineage>
        <taxon>Bacteria</taxon>
        <taxon>Bacillati</taxon>
        <taxon>Actinomycetota</taxon>
        <taxon>Actinomycetes</taxon>
        <taxon>Kitasatosporales</taxon>
        <taxon>Streptomycetaceae</taxon>
        <taxon>Streptomyces</taxon>
    </lineage>
</organism>
<reference key="1">
    <citation type="journal article" date="2008" name="J. Bacteriol.">
        <title>Genome sequence of the streptomycin-producing microorganism Streptomyces griseus IFO 13350.</title>
        <authorList>
            <person name="Ohnishi Y."/>
            <person name="Ishikawa J."/>
            <person name="Hara H."/>
            <person name="Suzuki H."/>
            <person name="Ikenoya M."/>
            <person name="Ikeda H."/>
            <person name="Yamashita A."/>
            <person name="Hattori M."/>
            <person name="Horinouchi S."/>
        </authorList>
    </citation>
    <scope>NUCLEOTIDE SEQUENCE [LARGE SCALE GENOMIC DNA]</scope>
    <source>
        <strain>JCM 4626 / CBS 651.72 / NBRC 13350 / KCC S-0626 / ISP 5235</strain>
    </source>
</reference>